<accession>A0JN40</accession>
<evidence type="ECO:0000250" key="1"/>
<evidence type="ECO:0000255" key="2"/>
<evidence type="ECO:0000255" key="3">
    <source>
        <dbReference type="PROSITE-ProRule" id="PRU00283"/>
    </source>
</evidence>
<evidence type="ECO:0000256" key="4">
    <source>
        <dbReference type="SAM" id="MobiDB-lite"/>
    </source>
</evidence>
<evidence type="ECO:0000305" key="5"/>
<protein>
    <recommendedName>
        <fullName>Kinesin-like protein KIF3C</fullName>
    </recommendedName>
</protein>
<organism>
    <name type="scientific">Bos taurus</name>
    <name type="common">Bovine</name>
    <dbReference type="NCBI Taxonomy" id="9913"/>
    <lineage>
        <taxon>Eukaryota</taxon>
        <taxon>Metazoa</taxon>
        <taxon>Chordata</taxon>
        <taxon>Craniata</taxon>
        <taxon>Vertebrata</taxon>
        <taxon>Euteleostomi</taxon>
        <taxon>Mammalia</taxon>
        <taxon>Eutheria</taxon>
        <taxon>Laurasiatheria</taxon>
        <taxon>Artiodactyla</taxon>
        <taxon>Ruminantia</taxon>
        <taxon>Pecora</taxon>
        <taxon>Bovidae</taxon>
        <taxon>Bovinae</taxon>
        <taxon>Bos</taxon>
    </lineage>
</organism>
<proteinExistence type="evidence at transcript level"/>
<sequence length="792" mass="89487">MASKTKASEALKVVARCRPLSRKEEAAGHEQILTMDVKLGQVTLRNPRAALGELPKTFTFDAVYDASSKQADLYDETVRPLVDSVLQGFNGTVFAYGQTGTGKTYTMQGTWVEPEQRGVIPNAFEHIFTHISRSQNQQYLVRASYLEIYQEEIRDLVSKEPGKRLELKENPETGVYIKDLSSFVTKNVKEIEHVMNLGNQTRAVGSTHMNEVSSRSHAIFVITVECSERGSDGQDHIRVGKLNLVDLAGSERQNKAGPNTTGGTATQPTGGGGGGGGGGGGGERPKEASKINLSLSALGNVIAALSGNRSTHIPYRDSKLTRLLQDSLGGNAKTIMVATLGPASHSYDESLSTLRFANRAKNIKNKPRVNEDPKDTLLREFQEEIARLKAQLEKKGMLGKRLRRKSSRRKKAVSAPAGYPEGPVIEAWVAEEEDDNNNNHRPPQPILETALDKNMENYLQEQKERLEEEKAAIQDDRSLVSEEKKKLLEEKEKMLEDLRREQEATELLAAKYKAMESKLLIGGRNIMDHTNEQQKMLELKRQEIAEQKRREREMQQEMMLRDEETMELRGTYTSLQQEVEVKTKKLKKLYAKLQAVKAEIQDQHDEYIRVRQDLEEAQNEQTRELKLKYLIIENFIPPEEKNKIMNRLFLDCEEEQWKFQPLVPSGANSSQMKKRPTSAVGYKRPISQYARVAMAMGSHPRYRAENIMFLELDVSPPAVFEMEFSHDQDQDPRALHMERLMRLDSFLERPSTSKVRKSRSWCQSPQRPPPPTAHASLAASAALRPTTVLDHE</sequence>
<keyword id="KW-0067">ATP-binding</keyword>
<keyword id="KW-0175">Coiled coil</keyword>
<keyword id="KW-0963">Cytoplasm</keyword>
<keyword id="KW-0206">Cytoskeleton</keyword>
<keyword id="KW-0493">Microtubule</keyword>
<keyword id="KW-0505">Motor protein</keyword>
<keyword id="KW-0547">Nucleotide-binding</keyword>
<keyword id="KW-1185">Reference proteome</keyword>
<comment type="function">
    <text evidence="1">Microtubule-based anterograde translocator for membranous organelles.</text>
</comment>
<comment type="subunit">
    <text evidence="1">Heterodimer of KIF3A and KIF3C.</text>
</comment>
<comment type="subcellular location">
    <subcellularLocation>
        <location evidence="5">Cytoplasm</location>
        <location evidence="5">Cytoskeleton</location>
    </subcellularLocation>
</comment>
<comment type="similarity">
    <text evidence="3">Belongs to the TRAFAC class myosin-kinesin ATPase superfamily. Kinesin family. Kinesin II subfamily.</text>
</comment>
<feature type="chain" id="PRO_0000284074" description="Kinesin-like protein KIF3C">
    <location>
        <begin position="1"/>
        <end position="792"/>
    </location>
</feature>
<feature type="domain" description="Kinesin motor" evidence="3">
    <location>
        <begin position="10"/>
        <end position="363"/>
    </location>
</feature>
<feature type="region of interest" description="Disordered" evidence="4">
    <location>
        <begin position="249"/>
        <end position="287"/>
    </location>
</feature>
<feature type="region of interest" description="Disordered" evidence="4">
    <location>
        <begin position="397"/>
        <end position="418"/>
    </location>
</feature>
<feature type="region of interest" description="Globular" evidence="2">
    <location>
        <begin position="628"/>
        <end position="792"/>
    </location>
</feature>
<feature type="region of interest" description="Disordered" evidence="4">
    <location>
        <begin position="749"/>
        <end position="792"/>
    </location>
</feature>
<feature type="coiled-coil region" evidence="2">
    <location>
        <begin position="374"/>
        <end position="627"/>
    </location>
</feature>
<feature type="compositionally biased region" description="Low complexity" evidence="4">
    <location>
        <begin position="257"/>
        <end position="268"/>
    </location>
</feature>
<feature type="compositionally biased region" description="Gly residues" evidence="4">
    <location>
        <begin position="269"/>
        <end position="282"/>
    </location>
</feature>
<feature type="compositionally biased region" description="Basic residues" evidence="4">
    <location>
        <begin position="397"/>
        <end position="412"/>
    </location>
</feature>
<feature type="compositionally biased region" description="Low complexity" evidence="4">
    <location>
        <begin position="773"/>
        <end position="792"/>
    </location>
</feature>
<feature type="binding site" evidence="3">
    <location>
        <begin position="97"/>
        <end position="104"/>
    </location>
    <ligand>
        <name>ATP</name>
        <dbReference type="ChEBI" id="CHEBI:30616"/>
    </ligand>
</feature>
<name>KIF3C_BOVIN</name>
<reference key="1">
    <citation type="submission" date="2006-10" db="EMBL/GenBank/DDBJ databases">
        <authorList>
            <consortium name="NIH - Mammalian Gene Collection (MGC) project"/>
        </authorList>
    </citation>
    <scope>NUCLEOTIDE SEQUENCE [LARGE SCALE MRNA]</scope>
    <source>
        <strain>Hereford</strain>
        <tissue>Thalamus</tissue>
    </source>
</reference>
<gene>
    <name type="primary">KIF3C</name>
</gene>
<dbReference type="EMBL" id="BC126505">
    <property type="protein sequence ID" value="AAI26506.1"/>
    <property type="molecule type" value="mRNA"/>
</dbReference>
<dbReference type="RefSeq" id="NP_001071623.1">
    <property type="nucleotide sequence ID" value="NM_001078155.1"/>
</dbReference>
<dbReference type="SMR" id="A0JN40"/>
<dbReference type="FunCoup" id="A0JN40">
    <property type="interactions" value="1234"/>
</dbReference>
<dbReference type="STRING" id="9913.ENSBTAP00000060288"/>
<dbReference type="PaxDb" id="9913-ENSBTAP00000025475"/>
<dbReference type="Ensembl" id="ENSBTAT00000025475.7">
    <property type="protein sequence ID" value="ENSBTAP00000025475.5"/>
    <property type="gene ID" value="ENSBTAG00000019138.7"/>
</dbReference>
<dbReference type="GeneID" id="777770"/>
<dbReference type="KEGG" id="bta:777770"/>
<dbReference type="CTD" id="3797"/>
<dbReference type="VEuPathDB" id="HostDB:ENSBTAG00000019138"/>
<dbReference type="VGNC" id="VGNC:30604">
    <property type="gene designation" value="KIF3C"/>
</dbReference>
<dbReference type="eggNOG" id="KOG4280">
    <property type="taxonomic scope" value="Eukaryota"/>
</dbReference>
<dbReference type="GeneTree" id="ENSGT00940000153739"/>
<dbReference type="HOGENOM" id="CLU_001485_22_4_1"/>
<dbReference type="InParanoid" id="A0JN40"/>
<dbReference type="OrthoDB" id="3176171at2759"/>
<dbReference type="TreeFam" id="TF105223"/>
<dbReference type="Proteomes" id="UP000009136">
    <property type="component" value="Chromosome 11"/>
</dbReference>
<dbReference type="Bgee" id="ENSBTAG00000019138">
    <property type="expression patterns" value="Expressed in prefrontal cortex and 104 other cell types or tissues"/>
</dbReference>
<dbReference type="GO" id="GO:0005737">
    <property type="term" value="C:cytoplasm"/>
    <property type="evidence" value="ECO:0007669"/>
    <property type="project" value="UniProtKB-KW"/>
</dbReference>
<dbReference type="GO" id="GO:0072686">
    <property type="term" value="C:mitotic spindle"/>
    <property type="evidence" value="ECO:0000318"/>
    <property type="project" value="GO_Central"/>
</dbReference>
<dbReference type="GO" id="GO:0005634">
    <property type="term" value="C:nucleus"/>
    <property type="evidence" value="ECO:0000318"/>
    <property type="project" value="GO_Central"/>
</dbReference>
<dbReference type="GO" id="GO:0005876">
    <property type="term" value="C:spindle microtubule"/>
    <property type="evidence" value="ECO:0000318"/>
    <property type="project" value="GO_Central"/>
</dbReference>
<dbReference type="GO" id="GO:0005524">
    <property type="term" value="F:ATP binding"/>
    <property type="evidence" value="ECO:0007669"/>
    <property type="project" value="UniProtKB-KW"/>
</dbReference>
<dbReference type="GO" id="GO:0008017">
    <property type="term" value="F:microtubule binding"/>
    <property type="evidence" value="ECO:0007669"/>
    <property type="project" value="InterPro"/>
</dbReference>
<dbReference type="GO" id="GO:0008574">
    <property type="term" value="F:plus-end-directed microtubule motor activity"/>
    <property type="evidence" value="ECO:0000318"/>
    <property type="project" value="GO_Central"/>
</dbReference>
<dbReference type="GO" id="GO:0007018">
    <property type="term" value="P:microtubule-based movement"/>
    <property type="evidence" value="ECO:0007669"/>
    <property type="project" value="InterPro"/>
</dbReference>
<dbReference type="GO" id="GO:0090307">
    <property type="term" value="P:mitotic spindle assembly"/>
    <property type="evidence" value="ECO:0000318"/>
    <property type="project" value="GO_Central"/>
</dbReference>
<dbReference type="GO" id="GO:0051231">
    <property type="term" value="P:spindle elongation"/>
    <property type="evidence" value="ECO:0000318"/>
    <property type="project" value="GO_Central"/>
</dbReference>
<dbReference type="CDD" id="cd01371">
    <property type="entry name" value="KISc_KIF3"/>
    <property type="match status" value="1"/>
</dbReference>
<dbReference type="FunFam" id="3.40.850.10:FF:000019">
    <property type="entry name" value="Kinesin-like protein KIN-5D"/>
    <property type="match status" value="1"/>
</dbReference>
<dbReference type="Gene3D" id="3.40.850.10">
    <property type="entry name" value="Kinesin motor domain"/>
    <property type="match status" value="1"/>
</dbReference>
<dbReference type="InterPro" id="IPR027640">
    <property type="entry name" value="Kinesin-like_fam"/>
</dbReference>
<dbReference type="InterPro" id="IPR019821">
    <property type="entry name" value="Kinesin_motor_CS"/>
</dbReference>
<dbReference type="InterPro" id="IPR001752">
    <property type="entry name" value="Kinesin_motor_dom"/>
</dbReference>
<dbReference type="InterPro" id="IPR036961">
    <property type="entry name" value="Kinesin_motor_dom_sf"/>
</dbReference>
<dbReference type="InterPro" id="IPR027417">
    <property type="entry name" value="P-loop_NTPase"/>
</dbReference>
<dbReference type="PANTHER" id="PTHR47968">
    <property type="entry name" value="CENTROMERE PROTEIN E"/>
    <property type="match status" value="1"/>
</dbReference>
<dbReference type="PANTHER" id="PTHR47968:SF76">
    <property type="entry name" value="KINESIN-LIKE PROTEIN"/>
    <property type="match status" value="1"/>
</dbReference>
<dbReference type="Pfam" id="PF00225">
    <property type="entry name" value="Kinesin"/>
    <property type="match status" value="2"/>
</dbReference>
<dbReference type="PRINTS" id="PR00380">
    <property type="entry name" value="KINESINHEAVY"/>
</dbReference>
<dbReference type="SMART" id="SM00129">
    <property type="entry name" value="KISc"/>
    <property type="match status" value="1"/>
</dbReference>
<dbReference type="SUPFAM" id="SSF52540">
    <property type="entry name" value="P-loop containing nucleoside triphosphate hydrolases"/>
    <property type="match status" value="1"/>
</dbReference>
<dbReference type="PROSITE" id="PS00411">
    <property type="entry name" value="KINESIN_MOTOR_1"/>
    <property type="match status" value="1"/>
</dbReference>
<dbReference type="PROSITE" id="PS50067">
    <property type="entry name" value="KINESIN_MOTOR_2"/>
    <property type="match status" value="1"/>
</dbReference>